<name>GCSP_YERPY</name>
<proteinExistence type="inferred from homology"/>
<organism>
    <name type="scientific">Yersinia pseudotuberculosis serotype O:3 (strain YPIII)</name>
    <dbReference type="NCBI Taxonomy" id="502800"/>
    <lineage>
        <taxon>Bacteria</taxon>
        <taxon>Pseudomonadati</taxon>
        <taxon>Pseudomonadota</taxon>
        <taxon>Gammaproteobacteria</taxon>
        <taxon>Enterobacterales</taxon>
        <taxon>Yersiniaceae</taxon>
        <taxon>Yersinia</taxon>
    </lineage>
</organism>
<comment type="function">
    <text evidence="1">The glycine cleavage system catalyzes the degradation of glycine. The P protein binds the alpha-amino group of glycine through its pyridoxal phosphate cofactor; CO(2) is released and the remaining methylamine moiety is then transferred to the lipoamide cofactor of the H protein.</text>
</comment>
<comment type="catalytic activity">
    <reaction evidence="1">
        <text>N(6)-[(R)-lipoyl]-L-lysyl-[glycine-cleavage complex H protein] + glycine + H(+) = N(6)-[(R)-S(8)-aminomethyldihydrolipoyl]-L-lysyl-[glycine-cleavage complex H protein] + CO2</text>
        <dbReference type="Rhea" id="RHEA:24304"/>
        <dbReference type="Rhea" id="RHEA-COMP:10494"/>
        <dbReference type="Rhea" id="RHEA-COMP:10495"/>
        <dbReference type="ChEBI" id="CHEBI:15378"/>
        <dbReference type="ChEBI" id="CHEBI:16526"/>
        <dbReference type="ChEBI" id="CHEBI:57305"/>
        <dbReference type="ChEBI" id="CHEBI:83099"/>
        <dbReference type="ChEBI" id="CHEBI:83143"/>
        <dbReference type="EC" id="1.4.4.2"/>
    </reaction>
</comment>
<comment type="cofactor">
    <cofactor evidence="1">
        <name>pyridoxal 5'-phosphate</name>
        <dbReference type="ChEBI" id="CHEBI:597326"/>
    </cofactor>
</comment>
<comment type="subunit">
    <text evidence="1">The glycine cleavage system is composed of four proteins: P, T, L and H.</text>
</comment>
<comment type="similarity">
    <text evidence="1">Belongs to the GcvP family.</text>
</comment>
<keyword id="KW-0560">Oxidoreductase</keyword>
<keyword id="KW-0663">Pyridoxal phosphate</keyword>
<protein>
    <recommendedName>
        <fullName evidence="1">Glycine dehydrogenase (decarboxylating)</fullName>
        <ecNumber evidence="1">1.4.4.2</ecNumber>
    </recommendedName>
    <alternativeName>
        <fullName evidence="1">Glycine cleavage system P-protein</fullName>
    </alternativeName>
    <alternativeName>
        <fullName evidence="1">Glycine decarboxylase</fullName>
    </alternativeName>
    <alternativeName>
        <fullName evidence="1">Glycine dehydrogenase (aminomethyl-transferring)</fullName>
    </alternativeName>
</protein>
<accession>B1JNS8</accession>
<gene>
    <name evidence="1" type="primary">gcvP</name>
    <name type="ordered locus">YPK_0869</name>
</gene>
<reference key="1">
    <citation type="submission" date="2008-02" db="EMBL/GenBank/DDBJ databases">
        <title>Complete sequence of Yersinia pseudotuberculosis YPIII.</title>
        <authorList>
            <consortium name="US DOE Joint Genome Institute"/>
            <person name="Copeland A."/>
            <person name="Lucas S."/>
            <person name="Lapidus A."/>
            <person name="Glavina del Rio T."/>
            <person name="Dalin E."/>
            <person name="Tice H."/>
            <person name="Bruce D."/>
            <person name="Goodwin L."/>
            <person name="Pitluck S."/>
            <person name="Munk A.C."/>
            <person name="Brettin T."/>
            <person name="Detter J.C."/>
            <person name="Han C."/>
            <person name="Tapia R."/>
            <person name="Schmutz J."/>
            <person name="Larimer F."/>
            <person name="Land M."/>
            <person name="Hauser L."/>
            <person name="Challacombe J.F."/>
            <person name="Green L."/>
            <person name="Lindler L.E."/>
            <person name="Nikolich M.P."/>
            <person name="Richardson P."/>
        </authorList>
    </citation>
    <scope>NUCLEOTIDE SEQUENCE [LARGE SCALE GENOMIC DNA]</scope>
    <source>
        <strain>YPIII</strain>
    </source>
</reference>
<dbReference type="EC" id="1.4.4.2" evidence="1"/>
<dbReference type="EMBL" id="CP000950">
    <property type="protein sequence ID" value="ACA67170.1"/>
    <property type="molecule type" value="Genomic_DNA"/>
</dbReference>
<dbReference type="RefSeq" id="WP_002209947.1">
    <property type="nucleotide sequence ID" value="NZ_CP009792.1"/>
</dbReference>
<dbReference type="SMR" id="B1JNS8"/>
<dbReference type="GeneID" id="57973735"/>
<dbReference type="KEGG" id="ypy:YPK_0869"/>
<dbReference type="PATRIC" id="fig|502800.11.peg.1493"/>
<dbReference type="GO" id="GO:0005829">
    <property type="term" value="C:cytosol"/>
    <property type="evidence" value="ECO:0007669"/>
    <property type="project" value="TreeGrafter"/>
</dbReference>
<dbReference type="GO" id="GO:0005960">
    <property type="term" value="C:glycine cleavage complex"/>
    <property type="evidence" value="ECO:0007669"/>
    <property type="project" value="TreeGrafter"/>
</dbReference>
<dbReference type="GO" id="GO:0016594">
    <property type="term" value="F:glycine binding"/>
    <property type="evidence" value="ECO:0007669"/>
    <property type="project" value="TreeGrafter"/>
</dbReference>
<dbReference type="GO" id="GO:0004375">
    <property type="term" value="F:glycine dehydrogenase (decarboxylating) activity"/>
    <property type="evidence" value="ECO:0007669"/>
    <property type="project" value="UniProtKB-EC"/>
</dbReference>
<dbReference type="GO" id="GO:0030170">
    <property type="term" value="F:pyridoxal phosphate binding"/>
    <property type="evidence" value="ECO:0007669"/>
    <property type="project" value="TreeGrafter"/>
</dbReference>
<dbReference type="GO" id="GO:0019464">
    <property type="term" value="P:glycine decarboxylation via glycine cleavage system"/>
    <property type="evidence" value="ECO:0007669"/>
    <property type="project" value="UniProtKB-UniRule"/>
</dbReference>
<dbReference type="CDD" id="cd00613">
    <property type="entry name" value="GDC-P"/>
    <property type="match status" value="2"/>
</dbReference>
<dbReference type="FunFam" id="3.40.640.10:FF:000005">
    <property type="entry name" value="Glycine dehydrogenase (decarboxylating), mitochondrial"/>
    <property type="match status" value="1"/>
</dbReference>
<dbReference type="FunFam" id="3.90.1150.10:FF:000007">
    <property type="entry name" value="Glycine dehydrogenase (decarboxylating), mitochondrial"/>
    <property type="match status" value="1"/>
</dbReference>
<dbReference type="FunFam" id="3.40.640.10:FF:000007">
    <property type="entry name" value="glycine dehydrogenase (Decarboxylating), mitochondrial"/>
    <property type="match status" value="1"/>
</dbReference>
<dbReference type="Gene3D" id="3.90.1150.10">
    <property type="entry name" value="Aspartate Aminotransferase, domain 1"/>
    <property type="match status" value="2"/>
</dbReference>
<dbReference type="Gene3D" id="3.40.640.10">
    <property type="entry name" value="Type I PLP-dependent aspartate aminotransferase-like (Major domain)"/>
    <property type="match status" value="2"/>
</dbReference>
<dbReference type="HAMAP" id="MF_00711">
    <property type="entry name" value="GcvP"/>
    <property type="match status" value="1"/>
</dbReference>
<dbReference type="InterPro" id="IPR003437">
    <property type="entry name" value="GcvP"/>
</dbReference>
<dbReference type="InterPro" id="IPR049316">
    <property type="entry name" value="GDC-P_C"/>
</dbReference>
<dbReference type="InterPro" id="IPR049315">
    <property type="entry name" value="GDC-P_N"/>
</dbReference>
<dbReference type="InterPro" id="IPR020581">
    <property type="entry name" value="GDC_P"/>
</dbReference>
<dbReference type="InterPro" id="IPR015424">
    <property type="entry name" value="PyrdxlP-dep_Trfase"/>
</dbReference>
<dbReference type="InterPro" id="IPR015421">
    <property type="entry name" value="PyrdxlP-dep_Trfase_major"/>
</dbReference>
<dbReference type="InterPro" id="IPR015422">
    <property type="entry name" value="PyrdxlP-dep_Trfase_small"/>
</dbReference>
<dbReference type="NCBIfam" id="TIGR00461">
    <property type="entry name" value="gcvP"/>
    <property type="match status" value="1"/>
</dbReference>
<dbReference type="NCBIfam" id="NF003346">
    <property type="entry name" value="PRK04366.1"/>
    <property type="match status" value="1"/>
</dbReference>
<dbReference type="PANTHER" id="PTHR11773:SF13">
    <property type="entry name" value="GLYCINE DEHYDROGENASE (DECARBOXYLATING)"/>
    <property type="match status" value="1"/>
</dbReference>
<dbReference type="PANTHER" id="PTHR11773">
    <property type="entry name" value="GLYCINE DEHYDROGENASE, DECARBOXYLATING"/>
    <property type="match status" value="1"/>
</dbReference>
<dbReference type="Pfam" id="PF21478">
    <property type="entry name" value="GcvP2_C"/>
    <property type="match status" value="1"/>
</dbReference>
<dbReference type="Pfam" id="PF02347">
    <property type="entry name" value="GDC-P"/>
    <property type="match status" value="2"/>
</dbReference>
<dbReference type="SUPFAM" id="SSF53383">
    <property type="entry name" value="PLP-dependent transferases"/>
    <property type="match status" value="2"/>
</dbReference>
<evidence type="ECO:0000255" key="1">
    <source>
        <dbReference type="HAMAP-Rule" id="MF_00711"/>
    </source>
</evidence>
<sequence length="959" mass="104737">MTQNLSQLEHNDAFIQRHIGSSVEQQQQMLAAVGASSLSTLIQQIVPADIQLPGPPPVGEAATEHQALAELKGIASQNQCYKSYIGMGYSPVLTPPVILRNMLENPGWYTAYTPYQPEVSQGRLEALLNFQQLTQDLTGLDLASASLLDEATAAAESMALAKRASKLKDANRFFVADDVHPQTLDVVLTRAETFGFDVIVDRAEKVLELDGIFGVLLQQVGTTGELHDYSALLAELKKRKIITSVAADIMALVLLTAPGAQGADVVFGSAQRFGVPMGYGGPHAAFFACRDEFKRSMPGRIIGVSRDAAGNTALRMAMQTREQHIRREKANSNICTSQVLLANIASLYAVYHGPQGLQRIAGRIHRMTDILAAGLQHAGLTLRFKHWFDTLTVEVKDKAAVLARALSFGINLRTDIHGAVGITLNETTSREDIQTLFALFVGDNHGLDIDQLDAAVSQHSQSIQDSMLRRDPILTHPVFNRYHSETEMMRYMHRLERKDLALNQAMIPLGSCTMKLNAAAEMIPITWPEFAELHPFCPPEQAAGYQQMIGQLSQWLVQLTGYDAVCMQPNSGAQGEYAGLLAIRRYHESRNQANRHICLIPSSAHGTNPASAQMAGMSVVVVACDKQGNIDLHDLRQKAEHAGDELSCIMVTYPSTHGVYEETIREVCQIVHQFGGQVYLDGANMNAQVGITTPGYIGADVSHLNLHKTFCIPHGGGGPGMGPIGVKAHLAPFVPGHSVVQIDGMTTQQGAVSAAPFGSASILPISWMYIRMMGADGLKQASQVAILNANYIATRLKNAYPVLYTGHDGRVAHECILDIRPLKEATGISEMDIAKRLIDFGFHAPTMSFPVAGTLMVEPTESESKVELDRFIDAMLAIRAEIEKVAQGEWPLEDNPLVNAPHTQAELVGEWTHPYSRELAVFPVAGVLENKYWPTVKRLDDVYGDRNLFCSCVPISDYE</sequence>
<feature type="chain" id="PRO_1000132464" description="Glycine dehydrogenase (decarboxylating)">
    <location>
        <begin position="1"/>
        <end position="959"/>
    </location>
</feature>
<feature type="modified residue" description="N6-(pyridoxal phosphate)lysine" evidence="1">
    <location>
        <position position="708"/>
    </location>
</feature>